<feature type="chain" id="PRO_1000196538" description="Small ribosomal subunit protein bS18">
    <location>
        <begin position="1"/>
        <end position="75"/>
    </location>
</feature>
<comment type="function">
    <text evidence="1">Binds as a heterodimer with protein bS6 to the central domain of the 16S rRNA, where it helps stabilize the platform of the 30S subunit.</text>
</comment>
<comment type="subunit">
    <text evidence="1">Part of the 30S ribosomal subunit. Forms a tight heterodimer with protein bS6.</text>
</comment>
<comment type="similarity">
    <text evidence="1">Belongs to the bacterial ribosomal protein bS18 family.</text>
</comment>
<protein>
    <recommendedName>
        <fullName evidence="1">Small ribosomal subunit protein bS18</fullName>
    </recommendedName>
    <alternativeName>
        <fullName evidence="2">30S ribosomal protein S18</fullName>
    </alternativeName>
</protein>
<evidence type="ECO:0000255" key="1">
    <source>
        <dbReference type="HAMAP-Rule" id="MF_00270"/>
    </source>
</evidence>
<evidence type="ECO:0000305" key="2"/>
<accession>C3LRA0</accession>
<keyword id="KW-0687">Ribonucleoprotein</keyword>
<keyword id="KW-0689">Ribosomal protein</keyword>
<keyword id="KW-0694">RNA-binding</keyword>
<keyword id="KW-0699">rRNA-binding</keyword>
<name>RS18_VIBCM</name>
<reference key="1">
    <citation type="journal article" date="2008" name="PLoS ONE">
        <title>A recalibrated molecular clock and independent origins for the cholera pandemic clones.</title>
        <authorList>
            <person name="Feng L."/>
            <person name="Reeves P.R."/>
            <person name="Lan R."/>
            <person name="Ren Y."/>
            <person name="Gao C."/>
            <person name="Zhou Z."/>
            <person name="Ren Y."/>
            <person name="Cheng J."/>
            <person name="Wang W."/>
            <person name="Wang J."/>
            <person name="Qian W."/>
            <person name="Li D."/>
            <person name="Wang L."/>
        </authorList>
    </citation>
    <scope>NUCLEOTIDE SEQUENCE [LARGE SCALE GENOMIC DNA]</scope>
    <source>
        <strain>M66-2</strain>
    </source>
</reference>
<dbReference type="EMBL" id="CP001233">
    <property type="protein sequence ID" value="ACP04680.1"/>
    <property type="molecule type" value="Genomic_DNA"/>
</dbReference>
<dbReference type="RefSeq" id="WP_000090471.1">
    <property type="nucleotide sequence ID" value="NC_012578.1"/>
</dbReference>
<dbReference type="SMR" id="C3LRA0"/>
<dbReference type="GeneID" id="97542797"/>
<dbReference type="KEGG" id="vcm:VCM66_0352"/>
<dbReference type="HOGENOM" id="CLU_148710_2_3_6"/>
<dbReference type="Proteomes" id="UP000001217">
    <property type="component" value="Chromosome I"/>
</dbReference>
<dbReference type="GO" id="GO:0022627">
    <property type="term" value="C:cytosolic small ribosomal subunit"/>
    <property type="evidence" value="ECO:0007669"/>
    <property type="project" value="TreeGrafter"/>
</dbReference>
<dbReference type="GO" id="GO:0070181">
    <property type="term" value="F:small ribosomal subunit rRNA binding"/>
    <property type="evidence" value="ECO:0007669"/>
    <property type="project" value="TreeGrafter"/>
</dbReference>
<dbReference type="GO" id="GO:0003735">
    <property type="term" value="F:structural constituent of ribosome"/>
    <property type="evidence" value="ECO:0007669"/>
    <property type="project" value="InterPro"/>
</dbReference>
<dbReference type="GO" id="GO:0006412">
    <property type="term" value="P:translation"/>
    <property type="evidence" value="ECO:0007669"/>
    <property type="project" value="UniProtKB-UniRule"/>
</dbReference>
<dbReference type="FunFam" id="4.10.640.10:FF:000001">
    <property type="entry name" value="30S ribosomal protein S18"/>
    <property type="match status" value="1"/>
</dbReference>
<dbReference type="Gene3D" id="4.10.640.10">
    <property type="entry name" value="Ribosomal protein S18"/>
    <property type="match status" value="1"/>
</dbReference>
<dbReference type="HAMAP" id="MF_00270">
    <property type="entry name" value="Ribosomal_bS18"/>
    <property type="match status" value="1"/>
</dbReference>
<dbReference type="InterPro" id="IPR001648">
    <property type="entry name" value="Ribosomal_bS18"/>
</dbReference>
<dbReference type="InterPro" id="IPR018275">
    <property type="entry name" value="Ribosomal_bS18_CS"/>
</dbReference>
<dbReference type="InterPro" id="IPR036870">
    <property type="entry name" value="Ribosomal_bS18_sf"/>
</dbReference>
<dbReference type="NCBIfam" id="TIGR00165">
    <property type="entry name" value="S18"/>
    <property type="match status" value="1"/>
</dbReference>
<dbReference type="PANTHER" id="PTHR13479">
    <property type="entry name" value="30S RIBOSOMAL PROTEIN S18"/>
    <property type="match status" value="1"/>
</dbReference>
<dbReference type="PANTHER" id="PTHR13479:SF40">
    <property type="entry name" value="SMALL RIBOSOMAL SUBUNIT PROTEIN BS18M"/>
    <property type="match status" value="1"/>
</dbReference>
<dbReference type="Pfam" id="PF01084">
    <property type="entry name" value="Ribosomal_S18"/>
    <property type="match status" value="1"/>
</dbReference>
<dbReference type="PRINTS" id="PR00974">
    <property type="entry name" value="RIBOSOMALS18"/>
</dbReference>
<dbReference type="SUPFAM" id="SSF46911">
    <property type="entry name" value="Ribosomal protein S18"/>
    <property type="match status" value="1"/>
</dbReference>
<dbReference type="PROSITE" id="PS00057">
    <property type="entry name" value="RIBOSOMAL_S18"/>
    <property type="match status" value="1"/>
</dbReference>
<organism>
    <name type="scientific">Vibrio cholerae serotype O1 (strain M66-2)</name>
    <dbReference type="NCBI Taxonomy" id="579112"/>
    <lineage>
        <taxon>Bacteria</taxon>
        <taxon>Pseudomonadati</taxon>
        <taxon>Pseudomonadota</taxon>
        <taxon>Gammaproteobacteria</taxon>
        <taxon>Vibrionales</taxon>
        <taxon>Vibrionaceae</taxon>
        <taxon>Vibrio</taxon>
    </lineage>
</organism>
<proteinExistence type="inferred from homology"/>
<gene>
    <name evidence="1" type="primary">rpsR</name>
    <name type="ordered locus">VCM66_0352</name>
</gene>
<sequence length="75" mass="8827">MARFFRRRKFCRFTAEGVQEIDYKDVATLKNYITEAGKIVPSRITGTSAKYQRQLARAIKRARYLALLPYTDKHQ</sequence>